<feature type="chain" id="PRO_0000382906" description="26S proteasome regulatory subunit 8 homolog">
    <location>
        <begin position="1"/>
        <end position="392"/>
    </location>
</feature>
<feature type="binding site" evidence="2">
    <location>
        <begin position="176"/>
        <end position="183"/>
    </location>
    <ligand>
        <name>ATP</name>
        <dbReference type="ChEBI" id="CHEBI:30616"/>
    </ligand>
</feature>
<proteinExistence type="evidence at protein level"/>
<protein>
    <recommendedName>
        <fullName>26S proteasome regulatory subunit 8 homolog</fullName>
    </recommendedName>
</protein>
<name>PRS8_ENCCU</name>
<comment type="function">
    <text evidence="1">Acts as a regulatory subunit of the 26S proteasome which degrades poly-ubiquitinated proteins in the cytoplasm and in the nucleus. It is essential for the regulated turnover of proteins and for the removal of misfolded proteins. The proteasome is a multicatalytic proteinase complex that is characterized by its ability to cleave peptides with Arg, Phe, Tyr, Leu, and Glu adjacent to the leaving group at neutral or slightly basic pH (By similarity).</text>
</comment>
<comment type="subunit">
    <text evidence="1">The 26S proteasome consists of a 20S proteasome core and two 19S regulatory subunits. The 20S proteasome core is composed of 28 subunits that are arranged in four stacked rings, resulting in a barrel-shaped structure. The two end rings are each formed by seven alpha subunits, and the two central rings are each formed by seven beta subunits. The catalytic chamber with the active sites is on the inside of the barrel (By similarity).</text>
</comment>
<comment type="subcellular location">
    <subcellularLocation>
        <location evidence="1">Cytoplasm</location>
    </subcellularLocation>
    <subcellularLocation>
        <location evidence="1">Nucleus</location>
    </subcellularLocation>
</comment>
<comment type="developmental stage">
    <text evidence="3">Expressed in late sporogonial stages.</text>
</comment>
<comment type="similarity">
    <text evidence="4">Belongs to the AAA ATPase family.</text>
</comment>
<gene>
    <name type="primary">RPT6</name>
    <name type="ordered locus">ECU09_1840</name>
</gene>
<keyword id="KW-0067">ATP-binding</keyword>
<keyword id="KW-0963">Cytoplasm</keyword>
<keyword id="KW-0547">Nucleotide-binding</keyword>
<keyword id="KW-0539">Nucleus</keyword>
<keyword id="KW-0647">Proteasome</keyword>
<keyword id="KW-1185">Reference proteome</keyword>
<sequence length="392" mass="44160">MAEGFCKNFYSNKLDHLEVQIAKKTKILRVLEQKRAELNRRVRFLREEISIVQEPSSNVGVVVEKMGKMQVLVKTNPDGKYLVKVEPGVNYDELKAGVRVALRSDSYDVHRILPTKVDPLVSLMMVEKVPDSTYQMIGGLDEQIKEIREVIELPIKHPELFENLGIAQPKGVLLYGPPGTGKTLLARAVAHHTQCKFIRVSGSELVQKYIGEGSRLVRELFIMAREHAPSIIFMDEIDSIGSTRGDSNKGSDSEVQRTMLELLNQLDGFESHNNIKVIMATNRIDILDPALLRTGRIDRKIEFPPPNESARLEILKIHSRKMNLTKGIDLETIASKMVGCSGAEVKAVCTEAGMYALRERRVHVTQEDFEMAVHKVLKKTGDLNSDLRKLLK</sequence>
<reference key="1">
    <citation type="journal article" date="2001" name="Nature">
        <title>Genome sequence and gene compaction of the eukaryote parasite Encephalitozoon cuniculi.</title>
        <authorList>
            <person name="Katinka M.D."/>
            <person name="Duprat S."/>
            <person name="Cornillot E."/>
            <person name="Metenier G."/>
            <person name="Thomarat F."/>
            <person name="Prensier G."/>
            <person name="Barbe V."/>
            <person name="Peyretaillade E."/>
            <person name="Brottier P."/>
            <person name="Wincker P."/>
            <person name="Delbac F."/>
            <person name="El Alaoui H."/>
            <person name="Peyret P."/>
            <person name="Saurin W."/>
            <person name="Gouy M."/>
            <person name="Weissenbach J."/>
            <person name="Vivares C.P."/>
        </authorList>
    </citation>
    <scope>NUCLEOTIDE SEQUENCE [LARGE SCALE GENOMIC DNA]</scope>
    <source>
        <strain>GB-M1</strain>
    </source>
</reference>
<reference key="2">
    <citation type="journal article" date="2009" name="BMC Genomics">
        <title>Identification of transcriptional signals in Encephalitozoon cuniculi widespread among Microsporidia phylum: support for accurate structural genome annotation.</title>
        <authorList>
            <person name="Peyretaillade E."/>
            <person name="Goncalves O."/>
            <person name="Terrat S."/>
            <person name="Dugat-Bony E."/>
            <person name="Wincker P."/>
            <person name="Cornman R.S."/>
            <person name="Evans J.D."/>
            <person name="Delbac F."/>
            <person name="Peyret P."/>
        </authorList>
    </citation>
    <scope>GENOME REANNOTATION</scope>
    <source>
        <strain>GB-M1</strain>
    </source>
</reference>
<reference key="3">
    <citation type="journal article" date="2006" name="Proteomics">
        <title>Proteomic analysis of the eukaryotic parasite Encephalitozoon cuniculi (microsporidia): a reference map for proteins expressed in late sporogonial stages.</title>
        <authorList>
            <person name="Brosson D."/>
            <person name="Kuhn L."/>
            <person name="Delbac F."/>
            <person name="Garin J."/>
            <person name="Vivares C.P."/>
            <person name="Texier C."/>
        </authorList>
    </citation>
    <scope>IDENTIFICATION BY MASS SPECTROMETRY [LARGE SCALE ANALYSIS]</scope>
    <scope>DEVELOPMENTAL STAGE</scope>
</reference>
<accession>Q8SQK0</accession>
<evidence type="ECO:0000250" key="1"/>
<evidence type="ECO:0000255" key="2"/>
<evidence type="ECO:0000269" key="3">
    <source>
    </source>
</evidence>
<evidence type="ECO:0000305" key="4"/>
<organism>
    <name type="scientific">Encephalitozoon cuniculi (strain GB-M1)</name>
    <name type="common">Microsporidian parasite</name>
    <dbReference type="NCBI Taxonomy" id="284813"/>
    <lineage>
        <taxon>Eukaryota</taxon>
        <taxon>Fungi</taxon>
        <taxon>Fungi incertae sedis</taxon>
        <taxon>Microsporidia</taxon>
        <taxon>Unikaryonidae</taxon>
        <taxon>Encephalitozoon</taxon>
    </lineage>
</organism>
<dbReference type="EMBL" id="AL590451">
    <property type="protein sequence ID" value="CAD27157.2"/>
    <property type="molecule type" value="Genomic_DNA"/>
</dbReference>
<dbReference type="RefSeq" id="XP_955738.1">
    <property type="nucleotide sequence ID" value="XM_950645.1"/>
</dbReference>
<dbReference type="SMR" id="Q8SQK0"/>
<dbReference type="FunCoup" id="Q8SQK0">
    <property type="interactions" value="104"/>
</dbReference>
<dbReference type="STRING" id="284813.Q8SQK0"/>
<dbReference type="VEuPathDB" id="MicrosporidiaDB:ECU09_1840"/>
<dbReference type="HOGENOM" id="CLU_000688_2_0_1"/>
<dbReference type="InParanoid" id="Q8SQK0"/>
<dbReference type="OrthoDB" id="1664597at2759"/>
<dbReference type="Proteomes" id="UP000000819">
    <property type="component" value="Chromosome IX"/>
</dbReference>
<dbReference type="GO" id="GO:0005737">
    <property type="term" value="C:cytoplasm"/>
    <property type="evidence" value="ECO:0007669"/>
    <property type="project" value="UniProtKB-SubCell"/>
</dbReference>
<dbReference type="GO" id="GO:0005634">
    <property type="term" value="C:nucleus"/>
    <property type="evidence" value="ECO:0007669"/>
    <property type="project" value="UniProtKB-SubCell"/>
</dbReference>
<dbReference type="GO" id="GO:0008540">
    <property type="term" value="C:proteasome regulatory particle, base subcomplex"/>
    <property type="evidence" value="ECO:0007669"/>
    <property type="project" value="UniProtKB-ARBA"/>
</dbReference>
<dbReference type="GO" id="GO:0005524">
    <property type="term" value="F:ATP binding"/>
    <property type="evidence" value="ECO:0007669"/>
    <property type="project" value="UniProtKB-KW"/>
</dbReference>
<dbReference type="GO" id="GO:0016887">
    <property type="term" value="F:ATP hydrolysis activity"/>
    <property type="evidence" value="ECO:0007669"/>
    <property type="project" value="InterPro"/>
</dbReference>
<dbReference type="CDD" id="cd19502">
    <property type="entry name" value="RecA-like_PAN_like"/>
    <property type="match status" value="1"/>
</dbReference>
<dbReference type="FunFam" id="1.10.8.60:FF:000006">
    <property type="entry name" value="26S protease regulatory subunit 8"/>
    <property type="match status" value="1"/>
</dbReference>
<dbReference type="FunFam" id="3.40.50.300:FF:000030">
    <property type="entry name" value="26S protease regulatory subunit 8"/>
    <property type="match status" value="1"/>
</dbReference>
<dbReference type="Gene3D" id="1.10.8.60">
    <property type="match status" value="1"/>
</dbReference>
<dbReference type="Gene3D" id="2.40.50.140">
    <property type="entry name" value="Nucleic acid-binding proteins"/>
    <property type="match status" value="1"/>
</dbReference>
<dbReference type="Gene3D" id="3.40.50.300">
    <property type="entry name" value="P-loop containing nucleotide triphosphate hydrolases"/>
    <property type="match status" value="1"/>
</dbReference>
<dbReference type="InterPro" id="IPR050221">
    <property type="entry name" value="26S_Proteasome_ATPase"/>
</dbReference>
<dbReference type="InterPro" id="IPR003593">
    <property type="entry name" value="AAA+_ATPase"/>
</dbReference>
<dbReference type="InterPro" id="IPR041569">
    <property type="entry name" value="AAA_lid_3"/>
</dbReference>
<dbReference type="InterPro" id="IPR003959">
    <property type="entry name" value="ATPase_AAA_core"/>
</dbReference>
<dbReference type="InterPro" id="IPR003960">
    <property type="entry name" value="ATPase_AAA_CS"/>
</dbReference>
<dbReference type="InterPro" id="IPR012340">
    <property type="entry name" value="NA-bd_OB-fold"/>
</dbReference>
<dbReference type="InterPro" id="IPR027417">
    <property type="entry name" value="P-loop_NTPase"/>
</dbReference>
<dbReference type="InterPro" id="IPR032501">
    <property type="entry name" value="Prot_ATP_ID_OB_2nd"/>
</dbReference>
<dbReference type="PANTHER" id="PTHR23073">
    <property type="entry name" value="26S PROTEASOME REGULATORY SUBUNIT"/>
    <property type="match status" value="1"/>
</dbReference>
<dbReference type="Pfam" id="PF00004">
    <property type="entry name" value="AAA"/>
    <property type="match status" value="1"/>
</dbReference>
<dbReference type="Pfam" id="PF17862">
    <property type="entry name" value="AAA_lid_3"/>
    <property type="match status" value="1"/>
</dbReference>
<dbReference type="Pfam" id="PF16450">
    <property type="entry name" value="Prot_ATP_ID_OB_C"/>
    <property type="match status" value="1"/>
</dbReference>
<dbReference type="SMART" id="SM00382">
    <property type="entry name" value="AAA"/>
    <property type="match status" value="1"/>
</dbReference>
<dbReference type="SUPFAM" id="SSF52540">
    <property type="entry name" value="P-loop containing nucleoside triphosphate hydrolases"/>
    <property type="match status" value="1"/>
</dbReference>
<dbReference type="PROSITE" id="PS00674">
    <property type="entry name" value="AAA"/>
    <property type="match status" value="1"/>
</dbReference>